<gene>
    <name evidence="1" type="primary">mtnN</name>
    <name type="ordered locus">Sbal223_3137</name>
</gene>
<sequence>MKIGIIGAMEPEVAHLIAAMTNATSQTIAGIEFIAGTLAGKDVVVTRSGIGKVAASIATTLLIEKYAPDAVINTGSAGGFVDTLAIGDIVISSEVRHHDVDVTAFGYEIGQMAQQPAAFIPAAHLVEAANKAIAQLGEVKAIEGLICTGDSFICDPVRTQAMLKNFPTMAACEMEGAAIAQVCHQFGVPFVVIRSLSDNANNDSPVDFDSYIVKAGYHSALMVMLLLEQLNPSAVK</sequence>
<comment type="function">
    <text evidence="1">Catalyzes the irreversible cleavage of the glycosidic bond in both 5'-methylthioadenosine (MTA) and S-adenosylhomocysteine (SAH/AdoHcy) to adenine and the corresponding thioribose, 5'-methylthioribose and S-ribosylhomocysteine, respectively. Also cleaves 5'-deoxyadenosine, a toxic by-product of radical S-adenosylmethionine (SAM) enzymes, into 5-deoxyribose and adenine.</text>
</comment>
<comment type="catalytic activity">
    <reaction evidence="1">
        <text>S-adenosyl-L-homocysteine + H2O = S-(5-deoxy-D-ribos-5-yl)-L-homocysteine + adenine</text>
        <dbReference type="Rhea" id="RHEA:17805"/>
        <dbReference type="ChEBI" id="CHEBI:15377"/>
        <dbReference type="ChEBI" id="CHEBI:16708"/>
        <dbReference type="ChEBI" id="CHEBI:57856"/>
        <dbReference type="ChEBI" id="CHEBI:58195"/>
        <dbReference type="EC" id="3.2.2.9"/>
    </reaction>
</comment>
<comment type="catalytic activity">
    <reaction evidence="1">
        <text>S-methyl-5'-thioadenosine + H2O = 5-(methylsulfanyl)-D-ribose + adenine</text>
        <dbReference type="Rhea" id="RHEA:13617"/>
        <dbReference type="ChEBI" id="CHEBI:15377"/>
        <dbReference type="ChEBI" id="CHEBI:16708"/>
        <dbReference type="ChEBI" id="CHEBI:17509"/>
        <dbReference type="ChEBI" id="CHEBI:78440"/>
        <dbReference type="EC" id="3.2.2.9"/>
    </reaction>
</comment>
<comment type="catalytic activity">
    <reaction evidence="1">
        <text>5'-deoxyadenosine + H2O = 5-deoxy-D-ribose + adenine</text>
        <dbReference type="Rhea" id="RHEA:29859"/>
        <dbReference type="ChEBI" id="CHEBI:15377"/>
        <dbReference type="ChEBI" id="CHEBI:16708"/>
        <dbReference type="ChEBI" id="CHEBI:17319"/>
        <dbReference type="ChEBI" id="CHEBI:149540"/>
        <dbReference type="EC" id="3.2.2.9"/>
    </reaction>
    <physiologicalReaction direction="left-to-right" evidence="1">
        <dbReference type="Rhea" id="RHEA:29860"/>
    </physiologicalReaction>
</comment>
<comment type="pathway">
    <text evidence="1">Amino-acid biosynthesis; L-methionine biosynthesis via salvage pathway; S-methyl-5-thio-alpha-D-ribose 1-phosphate from S-methyl-5'-thioadenosine (hydrolase route): step 1/2.</text>
</comment>
<comment type="similarity">
    <text evidence="1">Belongs to the PNP/UDP phosphorylase family. MtnN subfamily.</text>
</comment>
<feature type="chain" id="PRO_1000187430" description="5'-methylthioadenosine/S-adenosylhomocysteine nucleosidase">
    <location>
        <begin position="1"/>
        <end position="236"/>
    </location>
</feature>
<feature type="active site" description="Proton acceptor" evidence="1">
    <location>
        <position position="12"/>
    </location>
</feature>
<feature type="active site" description="Proton donor" evidence="1">
    <location>
        <position position="198"/>
    </location>
</feature>
<feature type="binding site" evidence="1">
    <location>
        <position position="78"/>
    </location>
    <ligand>
        <name>substrate</name>
    </ligand>
</feature>
<feature type="binding site" evidence="1">
    <location>
        <position position="153"/>
    </location>
    <ligand>
        <name>substrate</name>
    </ligand>
</feature>
<feature type="binding site" evidence="1">
    <location>
        <begin position="174"/>
        <end position="175"/>
    </location>
    <ligand>
        <name>substrate</name>
    </ligand>
</feature>
<name>MTNN_SHEB2</name>
<organism>
    <name type="scientific">Shewanella baltica (strain OS223)</name>
    <dbReference type="NCBI Taxonomy" id="407976"/>
    <lineage>
        <taxon>Bacteria</taxon>
        <taxon>Pseudomonadati</taxon>
        <taxon>Pseudomonadota</taxon>
        <taxon>Gammaproteobacteria</taxon>
        <taxon>Alteromonadales</taxon>
        <taxon>Shewanellaceae</taxon>
        <taxon>Shewanella</taxon>
    </lineage>
</organism>
<dbReference type="EC" id="3.2.2.9" evidence="1"/>
<dbReference type="EMBL" id="CP001252">
    <property type="protein sequence ID" value="ACK47622.1"/>
    <property type="molecule type" value="Genomic_DNA"/>
</dbReference>
<dbReference type="RefSeq" id="WP_006085054.1">
    <property type="nucleotide sequence ID" value="NC_011663.1"/>
</dbReference>
<dbReference type="SMR" id="B8EBS7"/>
<dbReference type="KEGG" id="sbp:Sbal223_3137"/>
<dbReference type="HOGENOM" id="CLU_031248_2_2_6"/>
<dbReference type="UniPathway" id="UPA00904">
    <property type="reaction ID" value="UER00871"/>
</dbReference>
<dbReference type="Proteomes" id="UP000002507">
    <property type="component" value="Chromosome"/>
</dbReference>
<dbReference type="GO" id="GO:0005829">
    <property type="term" value="C:cytosol"/>
    <property type="evidence" value="ECO:0007669"/>
    <property type="project" value="TreeGrafter"/>
</dbReference>
<dbReference type="GO" id="GO:0008782">
    <property type="term" value="F:adenosylhomocysteine nucleosidase activity"/>
    <property type="evidence" value="ECO:0007669"/>
    <property type="project" value="UniProtKB-UniRule"/>
</dbReference>
<dbReference type="GO" id="GO:0008930">
    <property type="term" value="F:methylthioadenosine nucleosidase activity"/>
    <property type="evidence" value="ECO:0007669"/>
    <property type="project" value="UniProtKB-UniRule"/>
</dbReference>
<dbReference type="GO" id="GO:0019509">
    <property type="term" value="P:L-methionine salvage from methylthioadenosine"/>
    <property type="evidence" value="ECO:0007669"/>
    <property type="project" value="UniProtKB-UniRule"/>
</dbReference>
<dbReference type="GO" id="GO:0019284">
    <property type="term" value="P:L-methionine salvage from S-adenosylmethionine"/>
    <property type="evidence" value="ECO:0007669"/>
    <property type="project" value="TreeGrafter"/>
</dbReference>
<dbReference type="GO" id="GO:0009164">
    <property type="term" value="P:nucleoside catabolic process"/>
    <property type="evidence" value="ECO:0007669"/>
    <property type="project" value="InterPro"/>
</dbReference>
<dbReference type="CDD" id="cd09008">
    <property type="entry name" value="MTAN"/>
    <property type="match status" value="1"/>
</dbReference>
<dbReference type="FunFam" id="3.40.50.1580:FF:000001">
    <property type="entry name" value="MTA/SAH nucleosidase family protein"/>
    <property type="match status" value="1"/>
</dbReference>
<dbReference type="Gene3D" id="3.40.50.1580">
    <property type="entry name" value="Nucleoside phosphorylase domain"/>
    <property type="match status" value="1"/>
</dbReference>
<dbReference type="HAMAP" id="MF_01684">
    <property type="entry name" value="Salvage_MtnN"/>
    <property type="match status" value="1"/>
</dbReference>
<dbReference type="InterPro" id="IPR010049">
    <property type="entry name" value="MTA_SAH_Nsdase"/>
</dbReference>
<dbReference type="InterPro" id="IPR000845">
    <property type="entry name" value="Nucleoside_phosphorylase_d"/>
</dbReference>
<dbReference type="InterPro" id="IPR035994">
    <property type="entry name" value="Nucleoside_phosphorylase_sf"/>
</dbReference>
<dbReference type="NCBIfam" id="TIGR01704">
    <property type="entry name" value="MTA_SAH-Nsdase"/>
    <property type="match status" value="1"/>
</dbReference>
<dbReference type="NCBIfam" id="NF004079">
    <property type="entry name" value="PRK05584.1"/>
    <property type="match status" value="1"/>
</dbReference>
<dbReference type="PANTHER" id="PTHR46832">
    <property type="entry name" value="5'-METHYLTHIOADENOSINE/S-ADENOSYLHOMOCYSTEINE NUCLEOSIDASE"/>
    <property type="match status" value="1"/>
</dbReference>
<dbReference type="PANTHER" id="PTHR46832:SF1">
    <property type="entry name" value="5'-METHYLTHIOADENOSINE_S-ADENOSYLHOMOCYSTEINE NUCLEOSIDASE"/>
    <property type="match status" value="1"/>
</dbReference>
<dbReference type="Pfam" id="PF01048">
    <property type="entry name" value="PNP_UDP_1"/>
    <property type="match status" value="1"/>
</dbReference>
<dbReference type="SUPFAM" id="SSF53167">
    <property type="entry name" value="Purine and uridine phosphorylases"/>
    <property type="match status" value="1"/>
</dbReference>
<accession>B8EBS7</accession>
<protein>
    <recommendedName>
        <fullName evidence="1">5'-methylthioadenosine/S-adenosylhomocysteine nucleosidase</fullName>
        <shortName evidence="1">MTA/SAH nucleosidase</shortName>
        <shortName evidence="1">MTAN</shortName>
        <ecNumber evidence="1">3.2.2.9</ecNumber>
    </recommendedName>
    <alternativeName>
        <fullName evidence="1">5'-deoxyadenosine nucleosidase</fullName>
        <shortName evidence="1">DOA nucleosidase</shortName>
        <shortName evidence="1">dAdo nucleosidase</shortName>
    </alternativeName>
    <alternativeName>
        <fullName evidence="1">5'-methylthioadenosine nucleosidase</fullName>
        <shortName evidence="1">MTA nucleosidase</shortName>
    </alternativeName>
    <alternativeName>
        <fullName evidence="1">S-adenosylhomocysteine nucleosidase</fullName>
        <shortName evidence="1">AdoHcy nucleosidase</shortName>
        <shortName evidence="1">SAH nucleosidase</shortName>
        <shortName evidence="1">SRH nucleosidase</shortName>
    </alternativeName>
</protein>
<keyword id="KW-0028">Amino-acid biosynthesis</keyword>
<keyword id="KW-0378">Hydrolase</keyword>
<keyword id="KW-0486">Methionine biosynthesis</keyword>
<evidence type="ECO:0000255" key="1">
    <source>
        <dbReference type="HAMAP-Rule" id="MF_01684"/>
    </source>
</evidence>
<reference key="1">
    <citation type="submission" date="2008-12" db="EMBL/GenBank/DDBJ databases">
        <title>Complete sequence of chromosome of Shewanella baltica OS223.</title>
        <authorList>
            <consortium name="US DOE Joint Genome Institute"/>
            <person name="Lucas S."/>
            <person name="Copeland A."/>
            <person name="Lapidus A."/>
            <person name="Glavina del Rio T."/>
            <person name="Dalin E."/>
            <person name="Tice H."/>
            <person name="Bruce D."/>
            <person name="Goodwin L."/>
            <person name="Pitluck S."/>
            <person name="Chertkov O."/>
            <person name="Meincke L."/>
            <person name="Brettin T."/>
            <person name="Detter J.C."/>
            <person name="Han C."/>
            <person name="Kuske C.R."/>
            <person name="Larimer F."/>
            <person name="Land M."/>
            <person name="Hauser L."/>
            <person name="Kyrpides N."/>
            <person name="Ovchinnikova G."/>
            <person name="Brettar I."/>
            <person name="Rodrigues J."/>
            <person name="Konstantinidis K."/>
            <person name="Tiedje J."/>
        </authorList>
    </citation>
    <scope>NUCLEOTIDE SEQUENCE [LARGE SCALE GENOMIC DNA]</scope>
    <source>
        <strain>OS223</strain>
    </source>
</reference>
<proteinExistence type="inferred from homology"/>